<gene>
    <name evidence="1" type="primary">ycaD</name>
    <name type="ordered locus">ECH74115_1061</name>
</gene>
<accession>B5YT34</accession>
<sequence length="382" mass="41460">MSTYTRPVMLLLSGLLLLTLAIAVLNTLVPLWLAQEHMSTWQVGVVSSSYFTGNLVGTLLTGYVIKRIGFNRSYYLASFIFAAGCAGLGLMIGFWSWLAWRFVAGVGCAMIWVVVESALMCSGTSRNRGRLLAAYMMVYYVGTFLGQLLVSKVSTELMSVLPWVTGLTLAGILPLLFTRVLNQQAENHDSTSITSMLKLRQARLGVNGCIISGIVLGSLYGLMPLYLNHKGVSNASIGFWMAVLVSAGILGQWPIGRLADKFGRLLVLRVQVFVVILGSIAMLSQAAMAPALFILGAAGFTLYPVAMAWACEKVEHHQLVAMNQALLLSYTVGSLLGPSFTAMLMQNFSDNLLFIMIASVSFIYLLMLLRNAGHTPKPVAHV</sequence>
<organism>
    <name type="scientific">Escherichia coli O157:H7 (strain EC4115 / EHEC)</name>
    <dbReference type="NCBI Taxonomy" id="444450"/>
    <lineage>
        <taxon>Bacteria</taxon>
        <taxon>Pseudomonadati</taxon>
        <taxon>Pseudomonadota</taxon>
        <taxon>Gammaproteobacteria</taxon>
        <taxon>Enterobacterales</taxon>
        <taxon>Enterobacteriaceae</taxon>
        <taxon>Escherichia</taxon>
    </lineage>
</organism>
<keyword id="KW-0997">Cell inner membrane</keyword>
<keyword id="KW-1003">Cell membrane</keyword>
<keyword id="KW-0472">Membrane</keyword>
<keyword id="KW-0812">Transmembrane</keyword>
<keyword id="KW-1133">Transmembrane helix</keyword>
<keyword id="KW-0813">Transport</keyword>
<evidence type="ECO:0000255" key="1">
    <source>
        <dbReference type="HAMAP-Rule" id="MF_01149"/>
    </source>
</evidence>
<name>YCAD_ECO5E</name>
<comment type="subcellular location">
    <subcellularLocation>
        <location evidence="1">Cell inner membrane</location>
        <topology evidence="1">Multi-pass membrane protein</topology>
    </subcellularLocation>
</comment>
<comment type="similarity">
    <text evidence="1">Belongs to the major facilitator superfamily. YcaD (TC 2.A.1.26) family.</text>
</comment>
<feature type="chain" id="PRO_1000137484" description="Uncharacterized MFS-type transporter YcaD">
    <location>
        <begin position="1"/>
        <end position="382"/>
    </location>
</feature>
<feature type="transmembrane region" description="Helical" evidence="1">
    <location>
        <begin position="14"/>
        <end position="34"/>
    </location>
</feature>
<feature type="transmembrane region" description="Helical" evidence="1">
    <location>
        <begin position="45"/>
        <end position="65"/>
    </location>
</feature>
<feature type="transmembrane region" description="Helical" evidence="1">
    <location>
        <begin position="79"/>
        <end position="99"/>
    </location>
</feature>
<feature type="transmembrane region" description="Helical" evidence="1">
    <location>
        <begin position="102"/>
        <end position="122"/>
    </location>
</feature>
<feature type="transmembrane region" description="Helical" evidence="1">
    <location>
        <begin position="131"/>
        <end position="151"/>
    </location>
</feature>
<feature type="transmembrane region" description="Helical" evidence="1">
    <location>
        <begin position="157"/>
        <end position="177"/>
    </location>
</feature>
<feature type="transmembrane region" description="Helical" evidence="1">
    <location>
        <begin position="204"/>
        <end position="224"/>
    </location>
</feature>
<feature type="transmembrane region" description="Helical" evidence="1">
    <location>
        <begin position="235"/>
        <end position="255"/>
    </location>
</feature>
<feature type="transmembrane region" description="Helical" evidence="1">
    <location>
        <begin position="270"/>
        <end position="290"/>
    </location>
</feature>
<feature type="transmembrane region" description="Helical" evidence="1">
    <location>
        <begin position="291"/>
        <end position="311"/>
    </location>
</feature>
<feature type="transmembrane region" description="Helical" evidence="1">
    <location>
        <begin position="325"/>
        <end position="345"/>
    </location>
</feature>
<feature type="transmembrane region" description="Helical" evidence="1">
    <location>
        <begin position="348"/>
        <end position="368"/>
    </location>
</feature>
<reference key="1">
    <citation type="journal article" date="2011" name="Proc. Natl. Acad. Sci. U.S.A.">
        <title>Genomic anatomy of Escherichia coli O157:H7 outbreaks.</title>
        <authorList>
            <person name="Eppinger M."/>
            <person name="Mammel M.K."/>
            <person name="Leclerc J.E."/>
            <person name="Ravel J."/>
            <person name="Cebula T.A."/>
        </authorList>
    </citation>
    <scope>NUCLEOTIDE SEQUENCE [LARGE SCALE GENOMIC DNA]</scope>
    <source>
        <strain>EC4115 / EHEC</strain>
    </source>
</reference>
<dbReference type="EMBL" id="CP001164">
    <property type="protein sequence ID" value="ACI35877.1"/>
    <property type="molecule type" value="Genomic_DNA"/>
</dbReference>
<dbReference type="RefSeq" id="WP_000109295.1">
    <property type="nucleotide sequence ID" value="NC_011353.1"/>
</dbReference>
<dbReference type="SMR" id="B5YT34"/>
<dbReference type="KEGG" id="ecf:ECH74115_1061"/>
<dbReference type="HOGENOM" id="CLU_035018_1_2_6"/>
<dbReference type="GO" id="GO:0005886">
    <property type="term" value="C:plasma membrane"/>
    <property type="evidence" value="ECO:0007669"/>
    <property type="project" value="UniProtKB-SubCell"/>
</dbReference>
<dbReference type="GO" id="GO:0022857">
    <property type="term" value="F:transmembrane transporter activity"/>
    <property type="evidence" value="ECO:0007669"/>
    <property type="project" value="UniProtKB-UniRule"/>
</dbReference>
<dbReference type="CDD" id="cd17477">
    <property type="entry name" value="MFS_YcaD_like"/>
    <property type="match status" value="1"/>
</dbReference>
<dbReference type="FunFam" id="1.20.1250.20:FF:000041">
    <property type="entry name" value="Uncharacterized MFS-type transporter YcaD"/>
    <property type="match status" value="1"/>
</dbReference>
<dbReference type="FunFam" id="1.20.1250.20:FF:000066">
    <property type="entry name" value="Uncharacterized MFS-type transporter YcaD"/>
    <property type="match status" value="1"/>
</dbReference>
<dbReference type="Gene3D" id="1.20.1250.20">
    <property type="entry name" value="MFS general substrate transporter like domains"/>
    <property type="match status" value="2"/>
</dbReference>
<dbReference type="HAMAP" id="MF_01149">
    <property type="entry name" value="MFS_YcaD"/>
    <property type="match status" value="1"/>
</dbReference>
<dbReference type="InterPro" id="IPR011701">
    <property type="entry name" value="MFS"/>
</dbReference>
<dbReference type="InterPro" id="IPR020846">
    <property type="entry name" value="MFS_dom"/>
</dbReference>
<dbReference type="InterPro" id="IPR036259">
    <property type="entry name" value="MFS_trans_sf"/>
</dbReference>
<dbReference type="InterPro" id="IPR023745">
    <property type="entry name" value="MFS_YcaD"/>
</dbReference>
<dbReference type="InterPro" id="IPR047200">
    <property type="entry name" value="MFS_YcaD-like"/>
</dbReference>
<dbReference type="NCBIfam" id="NF002962">
    <property type="entry name" value="PRK03633.1"/>
    <property type="match status" value="1"/>
</dbReference>
<dbReference type="PANTHER" id="PTHR23521">
    <property type="entry name" value="TRANSPORTER MFS SUPERFAMILY"/>
    <property type="match status" value="1"/>
</dbReference>
<dbReference type="PANTHER" id="PTHR23521:SF2">
    <property type="entry name" value="TRANSPORTER MFS SUPERFAMILY"/>
    <property type="match status" value="1"/>
</dbReference>
<dbReference type="Pfam" id="PF07690">
    <property type="entry name" value="MFS_1"/>
    <property type="match status" value="1"/>
</dbReference>
<dbReference type="SUPFAM" id="SSF103473">
    <property type="entry name" value="MFS general substrate transporter"/>
    <property type="match status" value="1"/>
</dbReference>
<dbReference type="PROSITE" id="PS50850">
    <property type="entry name" value="MFS"/>
    <property type="match status" value="1"/>
</dbReference>
<protein>
    <recommendedName>
        <fullName evidence="1">Uncharacterized MFS-type transporter YcaD</fullName>
    </recommendedName>
</protein>
<proteinExistence type="inferred from homology"/>